<feature type="chain" id="PRO_1000089796" description="UPF0758 protein BamMC406_2419">
    <location>
        <begin position="1"/>
        <end position="258"/>
    </location>
</feature>
<feature type="domain" description="MPN" evidence="1">
    <location>
        <begin position="136"/>
        <end position="258"/>
    </location>
</feature>
<feature type="region of interest" description="Disordered" evidence="2">
    <location>
        <begin position="13"/>
        <end position="42"/>
    </location>
</feature>
<feature type="short sequence motif" description="JAMM motif" evidence="1">
    <location>
        <begin position="207"/>
        <end position="220"/>
    </location>
</feature>
<feature type="compositionally biased region" description="Basic residues" evidence="2">
    <location>
        <begin position="31"/>
        <end position="42"/>
    </location>
</feature>
<feature type="binding site" evidence="1">
    <location>
        <position position="207"/>
    </location>
    <ligand>
        <name>Zn(2+)</name>
        <dbReference type="ChEBI" id="CHEBI:29105"/>
        <note>catalytic</note>
    </ligand>
</feature>
<feature type="binding site" evidence="1">
    <location>
        <position position="209"/>
    </location>
    <ligand>
        <name>Zn(2+)</name>
        <dbReference type="ChEBI" id="CHEBI:29105"/>
        <note>catalytic</note>
    </ligand>
</feature>
<feature type="binding site" evidence="1">
    <location>
        <position position="220"/>
    </location>
    <ligand>
        <name>Zn(2+)</name>
        <dbReference type="ChEBI" id="CHEBI:29105"/>
        <note>catalytic</note>
    </ligand>
</feature>
<gene>
    <name type="ordered locus">BamMC406_2419</name>
</gene>
<name>Y2419_BURA4</name>
<comment type="similarity">
    <text evidence="3">Belongs to the UPF0758 family.</text>
</comment>
<sequence length="258" mass="28065">MLSPCLAVPATECRDPADAPAAPARHTGPARPRKRRPRNWKPHLPRERLLERGPAALTDAELIALLLGTGGGGRDVFASARALLARFGDSLRDMLDAEPDVFATHPGIGTARSAVLIAVTEIARRALVEKARERLQIDSPGAVEDYLRLRIGTRPHEVFVTLYLDARHGLIDVEESARGSLTRMAVYPREIVRRALVLNAAALIIAHNHPSGAVQPSAEDRRLTRVLHEALALIDAKLLDHVVVGTADTFSFARAGWL</sequence>
<evidence type="ECO:0000255" key="1">
    <source>
        <dbReference type="PROSITE-ProRule" id="PRU01182"/>
    </source>
</evidence>
<evidence type="ECO:0000256" key="2">
    <source>
        <dbReference type="SAM" id="MobiDB-lite"/>
    </source>
</evidence>
<evidence type="ECO:0000305" key="3"/>
<dbReference type="EMBL" id="CP001025">
    <property type="protein sequence ID" value="ACB64897.1"/>
    <property type="molecule type" value="Genomic_DNA"/>
</dbReference>
<dbReference type="SMR" id="B1YV93"/>
<dbReference type="KEGG" id="bac:BamMC406_2419"/>
<dbReference type="HOGENOM" id="CLU_073529_0_1_4"/>
<dbReference type="OrthoDB" id="9804482at2"/>
<dbReference type="Proteomes" id="UP000001680">
    <property type="component" value="Chromosome 1"/>
</dbReference>
<dbReference type="GO" id="GO:0046872">
    <property type="term" value="F:metal ion binding"/>
    <property type="evidence" value="ECO:0007669"/>
    <property type="project" value="UniProtKB-KW"/>
</dbReference>
<dbReference type="GO" id="GO:0008237">
    <property type="term" value="F:metallopeptidase activity"/>
    <property type="evidence" value="ECO:0007669"/>
    <property type="project" value="UniProtKB-KW"/>
</dbReference>
<dbReference type="GO" id="GO:0006508">
    <property type="term" value="P:proteolysis"/>
    <property type="evidence" value="ECO:0007669"/>
    <property type="project" value="UniProtKB-KW"/>
</dbReference>
<dbReference type="CDD" id="cd08071">
    <property type="entry name" value="MPN_DUF2466"/>
    <property type="match status" value="1"/>
</dbReference>
<dbReference type="Gene3D" id="3.40.140.10">
    <property type="entry name" value="Cytidine Deaminase, domain 2"/>
    <property type="match status" value="1"/>
</dbReference>
<dbReference type="InterPro" id="IPR037518">
    <property type="entry name" value="MPN"/>
</dbReference>
<dbReference type="InterPro" id="IPR025657">
    <property type="entry name" value="RadC_JAB"/>
</dbReference>
<dbReference type="InterPro" id="IPR001405">
    <property type="entry name" value="UPF0758"/>
</dbReference>
<dbReference type="InterPro" id="IPR020891">
    <property type="entry name" value="UPF0758_CS"/>
</dbReference>
<dbReference type="InterPro" id="IPR046778">
    <property type="entry name" value="UPF0758_N"/>
</dbReference>
<dbReference type="NCBIfam" id="NF000642">
    <property type="entry name" value="PRK00024.1"/>
    <property type="match status" value="1"/>
</dbReference>
<dbReference type="NCBIfam" id="TIGR00608">
    <property type="entry name" value="radc"/>
    <property type="match status" value="1"/>
</dbReference>
<dbReference type="PANTHER" id="PTHR30471">
    <property type="entry name" value="DNA REPAIR PROTEIN RADC"/>
    <property type="match status" value="1"/>
</dbReference>
<dbReference type="PANTHER" id="PTHR30471:SF3">
    <property type="entry name" value="UPF0758 PROTEIN YEES-RELATED"/>
    <property type="match status" value="1"/>
</dbReference>
<dbReference type="Pfam" id="PF04002">
    <property type="entry name" value="RadC"/>
    <property type="match status" value="1"/>
</dbReference>
<dbReference type="Pfam" id="PF20582">
    <property type="entry name" value="UPF0758_N"/>
    <property type="match status" value="1"/>
</dbReference>
<dbReference type="PROSITE" id="PS50249">
    <property type="entry name" value="MPN"/>
    <property type="match status" value="1"/>
</dbReference>
<dbReference type="PROSITE" id="PS01302">
    <property type="entry name" value="UPF0758"/>
    <property type="match status" value="1"/>
</dbReference>
<keyword id="KW-0378">Hydrolase</keyword>
<keyword id="KW-0479">Metal-binding</keyword>
<keyword id="KW-0482">Metalloprotease</keyword>
<keyword id="KW-0645">Protease</keyword>
<keyword id="KW-0862">Zinc</keyword>
<organism>
    <name type="scientific">Burkholderia ambifaria (strain MC40-6)</name>
    <dbReference type="NCBI Taxonomy" id="398577"/>
    <lineage>
        <taxon>Bacteria</taxon>
        <taxon>Pseudomonadati</taxon>
        <taxon>Pseudomonadota</taxon>
        <taxon>Betaproteobacteria</taxon>
        <taxon>Burkholderiales</taxon>
        <taxon>Burkholderiaceae</taxon>
        <taxon>Burkholderia</taxon>
        <taxon>Burkholderia cepacia complex</taxon>
    </lineage>
</organism>
<protein>
    <recommendedName>
        <fullName>UPF0758 protein BamMC406_2419</fullName>
    </recommendedName>
</protein>
<accession>B1YV93</accession>
<reference key="1">
    <citation type="submission" date="2008-04" db="EMBL/GenBank/DDBJ databases">
        <title>Complete sequence of chromosome 1 of Burkholderia ambifaria MC40-6.</title>
        <authorList>
            <person name="Copeland A."/>
            <person name="Lucas S."/>
            <person name="Lapidus A."/>
            <person name="Glavina del Rio T."/>
            <person name="Dalin E."/>
            <person name="Tice H."/>
            <person name="Pitluck S."/>
            <person name="Chain P."/>
            <person name="Malfatti S."/>
            <person name="Shin M."/>
            <person name="Vergez L."/>
            <person name="Lang D."/>
            <person name="Schmutz J."/>
            <person name="Larimer F."/>
            <person name="Land M."/>
            <person name="Hauser L."/>
            <person name="Kyrpides N."/>
            <person name="Lykidis A."/>
            <person name="Ramette A."/>
            <person name="Konstantinidis K."/>
            <person name="Tiedje J."/>
            <person name="Richardson P."/>
        </authorList>
    </citation>
    <scope>NUCLEOTIDE SEQUENCE [LARGE SCALE GENOMIC DNA]</scope>
    <source>
        <strain>MC40-6</strain>
    </source>
</reference>
<proteinExistence type="inferred from homology"/>